<proteinExistence type="evidence at transcript level"/>
<reference key="1">
    <citation type="submission" date="2004-11" db="EMBL/GenBank/DDBJ databases">
        <authorList>
            <consortium name="The German cDNA consortium"/>
        </authorList>
    </citation>
    <scope>NUCLEOTIDE SEQUENCE [LARGE SCALE MRNA]</scope>
    <source>
        <tissue>Kidney</tissue>
    </source>
</reference>
<comment type="function">
    <text evidence="1 2">Lysosomal proton-coupled steroid conjugate and bile acid transporter. Preferentially recognizes lipophilic steroid conjugates or bile acis as endogenous substrates and seems to mediate escape from lysosomes to the cytoplasm (By similarity). Modulates hepatic cytosolic copper homeostasis, maybe acting as a lysosomal copper transporter and sequestering copper ions in the lysosome (By similarity). Delivers pathogen-associated molecular patterns to cytosolic pattern recognition receptors as part of the innate immune response to microbes. Selectively transports bacterial muramyl dipeptide (MDP) into the cytosol for recognition by NOD2, triggering inflammatory responses (By similarity). Likely acts as a redundant importer of cyclic GMP-AMP dinucleotides (cGAMPs) in monocyte and macrophage cell lineages. The transport mechanism, its electrogenicity and stoichiometry remain to be elucidated (By similarity).</text>
</comment>
<comment type="catalytic activity">
    <reaction evidence="1">
        <text>estrone 3-sulfate(out) + n H(+)(out) = estrone 3-sulfate(in) + n H(+)(in)</text>
        <dbReference type="Rhea" id="RHEA:75483"/>
        <dbReference type="ChEBI" id="CHEBI:15378"/>
        <dbReference type="ChEBI" id="CHEBI:60050"/>
    </reaction>
</comment>
<comment type="catalytic activity">
    <reaction evidence="1">
        <text>25-hydroxyvitamin D3 sulfate(out) + n H(+)(out) = 25-hydroxyvitamin D3 sulfate(in) + n H(+)(in)</text>
        <dbReference type="Rhea" id="RHEA:75491"/>
        <dbReference type="ChEBI" id="CHEBI:15378"/>
        <dbReference type="ChEBI" id="CHEBI:194336"/>
    </reaction>
</comment>
<comment type="catalytic activity">
    <reaction evidence="1">
        <text>cholate(out) + n H(+)(out) = cholate(in) + n H(+)(in)</text>
        <dbReference type="Rhea" id="RHEA:75499"/>
        <dbReference type="ChEBI" id="CHEBI:15378"/>
        <dbReference type="ChEBI" id="CHEBI:29747"/>
    </reaction>
</comment>
<comment type="catalytic activity">
    <reaction evidence="1">
        <text>glycocholate(out) + n H(+)(out) = glycocholate(in) + n H(+)(in)</text>
        <dbReference type="Rhea" id="RHEA:75503"/>
        <dbReference type="ChEBI" id="CHEBI:15378"/>
        <dbReference type="ChEBI" id="CHEBI:29746"/>
    </reaction>
</comment>
<comment type="catalytic activity">
    <reaction evidence="1">
        <text>taurocholate(out) + n H(+)(out) = taurocholate(in) + n H(+)(in)</text>
        <dbReference type="Rhea" id="RHEA:75507"/>
        <dbReference type="ChEBI" id="CHEBI:15378"/>
        <dbReference type="ChEBI" id="CHEBI:36257"/>
    </reaction>
</comment>
<comment type="catalytic activity">
    <reaction evidence="1">
        <text>dehydroepiandrosterone 3-sulfate(out) + n H(+)(out) = dehydroepiandrosterone 3-sulfate(in) + n H(+)(in)</text>
        <dbReference type="Rhea" id="RHEA:75487"/>
        <dbReference type="ChEBI" id="CHEBI:15378"/>
        <dbReference type="ChEBI" id="CHEBI:57905"/>
    </reaction>
</comment>
<comment type="catalytic activity">
    <reaction evidence="2">
        <text>N-acetyl-D-muramoyl-L-alanyl-D-isoglutamine(out) + n H(+)(out) = N-acetyl-D-muramoyl-L-alanyl-D-isoglutamine(in) + n H(+)(in)</text>
        <dbReference type="Rhea" id="RHEA:76371"/>
        <dbReference type="ChEBI" id="CHEBI:15378"/>
        <dbReference type="ChEBI" id="CHEBI:155830"/>
    </reaction>
    <physiologicalReaction direction="left-to-right" evidence="2">
        <dbReference type="Rhea" id="RHEA:76372"/>
    </physiologicalReaction>
</comment>
<comment type="catalytic activity">
    <reaction evidence="1">
        <text>2',3'-cGAMP(out) + n H(+)(out) = 2',3'-cGAMP(in) + n H(+)(in)</text>
        <dbReference type="Rhea" id="RHEA:76411"/>
        <dbReference type="ChEBI" id="CHEBI:15378"/>
        <dbReference type="ChEBI" id="CHEBI:143093"/>
    </reaction>
    <physiologicalReaction direction="left-to-right" evidence="1">
        <dbReference type="Rhea" id="RHEA:76412"/>
    </physiologicalReaction>
</comment>
<comment type="subcellular location">
    <subcellularLocation>
        <location evidence="1">Lysosome membrane</location>
        <topology evidence="3">Multi-pass membrane protein</topology>
    </subcellularLocation>
</comment>
<comment type="similarity">
    <text evidence="4">Belongs to the major facilitator superfamily. SLC46A family.</text>
</comment>
<organism>
    <name type="scientific">Pongo abelii</name>
    <name type="common">Sumatran orangutan</name>
    <name type="synonym">Pongo pygmaeus abelii</name>
    <dbReference type="NCBI Taxonomy" id="9601"/>
    <lineage>
        <taxon>Eukaryota</taxon>
        <taxon>Metazoa</taxon>
        <taxon>Chordata</taxon>
        <taxon>Craniata</taxon>
        <taxon>Vertebrata</taxon>
        <taxon>Euteleostomi</taxon>
        <taxon>Mammalia</taxon>
        <taxon>Eutheria</taxon>
        <taxon>Euarchontoglires</taxon>
        <taxon>Primates</taxon>
        <taxon>Haplorrhini</taxon>
        <taxon>Catarrhini</taxon>
        <taxon>Hominidae</taxon>
        <taxon>Pongo</taxon>
    </lineage>
</organism>
<keyword id="KW-0325">Glycoprotein</keyword>
<keyword id="KW-0458">Lysosome</keyword>
<keyword id="KW-0472">Membrane</keyword>
<keyword id="KW-1185">Reference proteome</keyword>
<keyword id="KW-0732">Signal</keyword>
<keyword id="KW-0769">Symport</keyword>
<keyword id="KW-0812">Transmembrane</keyword>
<keyword id="KW-1133">Transmembrane helix</keyword>
<keyword id="KW-0813">Transport</keyword>
<protein>
    <recommendedName>
        <fullName>Lysosomal proton-coupled steroid conjugate and bile acid symporter SLC46A3</fullName>
    </recommendedName>
    <alternativeName>
        <fullName>Solute carrier family 46 member 3</fullName>
    </alternativeName>
</protein>
<name>S46A3_PONAB</name>
<sequence length="463" mass="51652">MKILFVEPAIFLSAFAMTLTSPLTTQYVYRRIWEETGNYTFSSDSNISECEKNKSSPIFAFQEEVQKKVSRFNLQMDISGLIPGLVSTFILLSISDHYGRKFPMILSSVGALATSVWLCLLCYFAFPFQLLIASTFIGAFCGNYTTFWGACFAYIVDQCKEHKQKTIRIAVIDFLLGLVTGLTGLSSGYFIRELGFGWSFLIIAASLAVNLIYILFFLGDPVKECSSQNVTMSCSEGFKNLFYRTYMLFKNASGKRRFLLCLLLFTTITYFFVVIGIAPIFILYELDSPLCWNEVFIGYGSALGSASFLTSFLGIWLFSYCMEDIHMAFIGIFTTMTGMVMTAFASTTLMMFLARVPFLFTIVPFSVLRSMLSKVVRSTEQGILFACIAFLETLGGVTAVSTFNGIYSATVAWYPGFTFLLSAGLLLLPAISLCVVKCTSWNEGSYELLIQEESSEDASDRAC</sequence>
<dbReference type="EMBL" id="CR858615">
    <property type="protein sequence ID" value="CAH90837.1"/>
    <property type="molecule type" value="mRNA"/>
</dbReference>
<dbReference type="RefSeq" id="NP_001125478.1">
    <property type="nucleotide sequence ID" value="NM_001132006.1"/>
</dbReference>
<dbReference type="SMR" id="Q5RBM3"/>
<dbReference type="FunCoup" id="Q5RBM3">
    <property type="interactions" value="148"/>
</dbReference>
<dbReference type="STRING" id="9601.ENSPPYP00000005976"/>
<dbReference type="GlyCosmos" id="Q5RBM3">
    <property type="glycosylation" value="3 sites, No reported glycans"/>
</dbReference>
<dbReference type="Ensembl" id="ENSPPYT00000006211.3">
    <property type="protein sequence ID" value="ENSPPYP00000005976.2"/>
    <property type="gene ID" value="ENSPPYG00000005248.3"/>
</dbReference>
<dbReference type="GeneID" id="100172387"/>
<dbReference type="KEGG" id="pon:100172387"/>
<dbReference type="CTD" id="283537"/>
<dbReference type="eggNOG" id="KOG2816">
    <property type="taxonomic scope" value="Eukaryota"/>
</dbReference>
<dbReference type="GeneTree" id="ENSGT00950000183096"/>
<dbReference type="HOGENOM" id="CLU_028365_1_1_1"/>
<dbReference type="InParanoid" id="Q5RBM3"/>
<dbReference type="OMA" id="DNTSRCA"/>
<dbReference type="OrthoDB" id="3026777at2759"/>
<dbReference type="TreeFam" id="TF315701"/>
<dbReference type="Proteomes" id="UP000001595">
    <property type="component" value="Chromosome 13"/>
</dbReference>
<dbReference type="GO" id="GO:0005765">
    <property type="term" value="C:lysosomal membrane"/>
    <property type="evidence" value="ECO:0007669"/>
    <property type="project" value="UniProtKB-SubCell"/>
</dbReference>
<dbReference type="GO" id="GO:0005375">
    <property type="term" value="F:copper ion transmembrane transporter activity"/>
    <property type="evidence" value="ECO:0007669"/>
    <property type="project" value="Ensembl"/>
</dbReference>
<dbReference type="GO" id="GO:0015293">
    <property type="term" value="F:symporter activity"/>
    <property type="evidence" value="ECO:0007669"/>
    <property type="project" value="UniProtKB-KW"/>
</dbReference>
<dbReference type="GO" id="GO:1904613">
    <property type="term" value="P:cellular response to 2,3,7,8-tetrachlorodibenzodioxine"/>
    <property type="evidence" value="ECO:0007669"/>
    <property type="project" value="Ensembl"/>
</dbReference>
<dbReference type="GO" id="GO:0034486">
    <property type="term" value="P:vacuolar transmembrane transport"/>
    <property type="evidence" value="ECO:0007669"/>
    <property type="project" value="Ensembl"/>
</dbReference>
<dbReference type="CDD" id="cd17448">
    <property type="entry name" value="MFS_SLC46A3"/>
    <property type="match status" value="1"/>
</dbReference>
<dbReference type="Gene3D" id="1.20.1250.20">
    <property type="entry name" value="MFS general substrate transporter like domains"/>
    <property type="match status" value="1"/>
</dbReference>
<dbReference type="InterPro" id="IPR011701">
    <property type="entry name" value="MFS"/>
</dbReference>
<dbReference type="InterPro" id="IPR036259">
    <property type="entry name" value="MFS_trans_sf"/>
</dbReference>
<dbReference type="PANTHER" id="PTHR23507:SF9">
    <property type="entry name" value="LYSOSOMAL PROTON-COUPLED STEROID CONJUGATE AND BILE ACID SYMPORTER SLC46A3"/>
    <property type="match status" value="1"/>
</dbReference>
<dbReference type="PANTHER" id="PTHR23507">
    <property type="entry name" value="ZGC:174356"/>
    <property type="match status" value="1"/>
</dbReference>
<dbReference type="Pfam" id="PF07690">
    <property type="entry name" value="MFS_1"/>
    <property type="match status" value="1"/>
</dbReference>
<dbReference type="SUPFAM" id="SSF103473">
    <property type="entry name" value="MFS general substrate transporter"/>
    <property type="match status" value="1"/>
</dbReference>
<feature type="signal peptide" evidence="3">
    <location>
        <begin position="1"/>
        <end position="20"/>
    </location>
</feature>
<feature type="chain" id="PRO_0000307255" description="Lysosomal proton-coupled steroid conjugate and bile acid symporter SLC46A3">
    <location>
        <begin position="21"/>
        <end position="463"/>
    </location>
</feature>
<feature type="topological domain" description="Extracellular" evidence="3">
    <location>
        <begin position="21"/>
        <end position="73"/>
    </location>
</feature>
<feature type="transmembrane region" description="Helical" evidence="3">
    <location>
        <begin position="74"/>
        <end position="94"/>
    </location>
</feature>
<feature type="topological domain" description="Cytoplasmic" evidence="3">
    <location>
        <begin position="95"/>
        <end position="101"/>
    </location>
</feature>
<feature type="transmembrane region" description="Helical" evidence="3">
    <location>
        <begin position="102"/>
        <end position="124"/>
    </location>
</feature>
<feature type="topological domain" description="Extracellular" evidence="3">
    <location>
        <begin position="125"/>
        <end position="133"/>
    </location>
</feature>
<feature type="transmembrane region" description="Helical" evidence="3">
    <location>
        <begin position="134"/>
        <end position="156"/>
    </location>
</feature>
<feature type="topological domain" description="Cytoplasmic" evidence="3">
    <location>
        <begin position="157"/>
        <end position="170"/>
    </location>
</feature>
<feature type="transmembrane region" description="Helical" evidence="3">
    <location>
        <begin position="171"/>
        <end position="191"/>
    </location>
</feature>
<feature type="topological domain" description="Extracellular" evidence="3">
    <location>
        <begin position="192"/>
        <end position="197"/>
    </location>
</feature>
<feature type="transmembrane region" description="Helical" evidence="3">
    <location>
        <begin position="198"/>
        <end position="218"/>
    </location>
</feature>
<feature type="topological domain" description="Cytoplasmic" evidence="3">
    <location>
        <begin position="219"/>
        <end position="261"/>
    </location>
</feature>
<feature type="transmembrane region" description="Helical" evidence="3">
    <location>
        <begin position="262"/>
        <end position="282"/>
    </location>
</feature>
<feature type="topological domain" description="Extracellular" evidence="3">
    <location>
        <begin position="283"/>
        <end position="294"/>
    </location>
</feature>
<feature type="transmembrane region" description="Helical" evidence="3">
    <location>
        <begin position="295"/>
        <end position="315"/>
    </location>
</feature>
<feature type="topological domain" description="Cytoplasmic" evidence="3">
    <location>
        <begin position="316"/>
        <end position="324"/>
    </location>
</feature>
<feature type="transmembrane region" description="Helical" evidence="3">
    <location>
        <begin position="325"/>
        <end position="345"/>
    </location>
</feature>
<feature type="topological domain" description="Extracellular" evidence="3">
    <location>
        <begin position="346"/>
        <end position="347"/>
    </location>
</feature>
<feature type="transmembrane region" description="Helical" evidence="3">
    <location>
        <begin position="348"/>
        <end position="368"/>
    </location>
</feature>
<feature type="topological domain" description="Cytoplasmic" evidence="3">
    <location>
        <begin position="369"/>
        <end position="382"/>
    </location>
</feature>
<feature type="transmembrane region" description="Helical" evidence="3">
    <location>
        <begin position="383"/>
        <end position="403"/>
    </location>
</feature>
<feature type="topological domain" description="Extracellular" evidence="3">
    <location>
        <begin position="404"/>
        <end position="415"/>
    </location>
</feature>
<feature type="transmembrane region" description="Helical" evidence="3">
    <location>
        <begin position="416"/>
        <end position="436"/>
    </location>
</feature>
<feature type="topological domain" description="Cytoplasmic" evidence="3">
    <location>
        <begin position="437"/>
        <end position="463"/>
    </location>
</feature>
<feature type="short sequence motif" description="Tyrosine-based lysosomal-sorting motif" evidence="1">
    <location>
        <begin position="446"/>
        <end position="449"/>
    </location>
</feature>
<feature type="glycosylation site" description="N-linked (GlcNAc...) asparagine" evidence="3">
    <location>
        <position position="38"/>
    </location>
</feature>
<feature type="glycosylation site" description="N-linked (GlcNAc...) asparagine" evidence="3">
    <location>
        <position position="46"/>
    </location>
</feature>
<feature type="glycosylation site" description="N-linked (GlcNAc...) asparagine" evidence="3">
    <location>
        <position position="53"/>
    </location>
</feature>
<gene>
    <name type="primary">SLC46A3</name>
</gene>
<evidence type="ECO:0000250" key="1">
    <source>
        <dbReference type="UniProtKB" id="Q7Z3Q1"/>
    </source>
</evidence>
<evidence type="ECO:0000250" key="2">
    <source>
        <dbReference type="UniProtKB" id="Q9DC26"/>
    </source>
</evidence>
<evidence type="ECO:0000255" key="3"/>
<evidence type="ECO:0000305" key="4"/>
<accession>Q5RBM3</accession>